<gene>
    <name evidence="1" type="primary">aroQ</name>
    <name type="ordered locus">CA_C0899</name>
</gene>
<feature type="chain" id="PRO_0000159891" description="3-dehydroquinate dehydratase">
    <location>
        <begin position="1"/>
        <end position="144"/>
    </location>
</feature>
<feature type="active site" description="Proton acceptor" evidence="1">
    <location>
        <position position="22"/>
    </location>
</feature>
<feature type="active site" description="Proton donor" evidence="1">
    <location>
        <position position="99"/>
    </location>
</feature>
<feature type="binding site" evidence="1">
    <location>
        <position position="73"/>
    </location>
    <ligand>
        <name>substrate</name>
    </ligand>
</feature>
<feature type="binding site" evidence="1">
    <location>
        <position position="79"/>
    </location>
    <ligand>
        <name>substrate</name>
    </ligand>
</feature>
<feature type="binding site" evidence="1">
    <location>
        <position position="86"/>
    </location>
    <ligand>
        <name>substrate</name>
    </ligand>
</feature>
<feature type="binding site" evidence="1">
    <location>
        <begin position="100"/>
        <end position="101"/>
    </location>
    <ligand>
        <name>substrate</name>
    </ligand>
</feature>
<feature type="binding site" evidence="1">
    <location>
        <position position="110"/>
    </location>
    <ligand>
        <name>substrate</name>
    </ligand>
</feature>
<feature type="site" description="Transition state stabilizer" evidence="1">
    <location>
        <position position="17"/>
    </location>
</feature>
<proteinExistence type="inferred from homology"/>
<accession>Q97KL8</accession>
<keyword id="KW-0028">Amino-acid biosynthesis</keyword>
<keyword id="KW-0057">Aromatic amino acid biosynthesis</keyword>
<keyword id="KW-0456">Lyase</keyword>
<keyword id="KW-1185">Reference proteome</keyword>
<dbReference type="EC" id="4.2.1.10" evidence="1"/>
<dbReference type="EMBL" id="AE001437">
    <property type="protein sequence ID" value="AAK78875.1"/>
    <property type="molecule type" value="Genomic_DNA"/>
</dbReference>
<dbReference type="PIR" id="H97010">
    <property type="entry name" value="H97010"/>
</dbReference>
<dbReference type="RefSeq" id="NP_347535.1">
    <property type="nucleotide sequence ID" value="NC_003030.1"/>
</dbReference>
<dbReference type="RefSeq" id="WP_010964217.1">
    <property type="nucleotide sequence ID" value="NC_003030.1"/>
</dbReference>
<dbReference type="SMR" id="Q97KL8"/>
<dbReference type="STRING" id="272562.CA_C0899"/>
<dbReference type="GeneID" id="44997409"/>
<dbReference type="KEGG" id="cac:CA_C0899"/>
<dbReference type="PATRIC" id="fig|272562.8.peg.1108"/>
<dbReference type="eggNOG" id="COG0757">
    <property type="taxonomic scope" value="Bacteria"/>
</dbReference>
<dbReference type="HOGENOM" id="CLU_090968_2_0_9"/>
<dbReference type="OrthoDB" id="9790793at2"/>
<dbReference type="UniPathway" id="UPA00053">
    <property type="reaction ID" value="UER00086"/>
</dbReference>
<dbReference type="Proteomes" id="UP000000814">
    <property type="component" value="Chromosome"/>
</dbReference>
<dbReference type="GO" id="GO:0003855">
    <property type="term" value="F:3-dehydroquinate dehydratase activity"/>
    <property type="evidence" value="ECO:0007669"/>
    <property type="project" value="UniProtKB-UniRule"/>
</dbReference>
<dbReference type="GO" id="GO:0008652">
    <property type="term" value="P:amino acid biosynthetic process"/>
    <property type="evidence" value="ECO:0007669"/>
    <property type="project" value="UniProtKB-KW"/>
</dbReference>
<dbReference type="GO" id="GO:0009073">
    <property type="term" value="P:aromatic amino acid family biosynthetic process"/>
    <property type="evidence" value="ECO:0007669"/>
    <property type="project" value="UniProtKB-KW"/>
</dbReference>
<dbReference type="GO" id="GO:0009423">
    <property type="term" value="P:chorismate biosynthetic process"/>
    <property type="evidence" value="ECO:0007669"/>
    <property type="project" value="UniProtKB-UniRule"/>
</dbReference>
<dbReference type="GO" id="GO:0019631">
    <property type="term" value="P:quinate catabolic process"/>
    <property type="evidence" value="ECO:0007669"/>
    <property type="project" value="TreeGrafter"/>
</dbReference>
<dbReference type="CDD" id="cd00466">
    <property type="entry name" value="DHQase_II"/>
    <property type="match status" value="1"/>
</dbReference>
<dbReference type="Gene3D" id="3.40.50.9100">
    <property type="entry name" value="Dehydroquinase, class II"/>
    <property type="match status" value="1"/>
</dbReference>
<dbReference type="HAMAP" id="MF_00169">
    <property type="entry name" value="AroQ"/>
    <property type="match status" value="1"/>
</dbReference>
<dbReference type="InterPro" id="IPR001874">
    <property type="entry name" value="DHquinase_II"/>
</dbReference>
<dbReference type="InterPro" id="IPR018509">
    <property type="entry name" value="DHquinase_II_CS"/>
</dbReference>
<dbReference type="InterPro" id="IPR036441">
    <property type="entry name" value="DHquinase_II_sf"/>
</dbReference>
<dbReference type="NCBIfam" id="TIGR01088">
    <property type="entry name" value="aroQ"/>
    <property type="match status" value="1"/>
</dbReference>
<dbReference type="NCBIfam" id="NF003805">
    <property type="entry name" value="PRK05395.1-2"/>
    <property type="match status" value="1"/>
</dbReference>
<dbReference type="NCBIfam" id="NF003806">
    <property type="entry name" value="PRK05395.1-3"/>
    <property type="match status" value="1"/>
</dbReference>
<dbReference type="NCBIfam" id="NF003807">
    <property type="entry name" value="PRK05395.1-4"/>
    <property type="match status" value="1"/>
</dbReference>
<dbReference type="PANTHER" id="PTHR21272">
    <property type="entry name" value="CATABOLIC 3-DEHYDROQUINASE"/>
    <property type="match status" value="1"/>
</dbReference>
<dbReference type="PANTHER" id="PTHR21272:SF3">
    <property type="entry name" value="CATABOLIC 3-DEHYDROQUINASE"/>
    <property type="match status" value="1"/>
</dbReference>
<dbReference type="Pfam" id="PF01220">
    <property type="entry name" value="DHquinase_II"/>
    <property type="match status" value="1"/>
</dbReference>
<dbReference type="PIRSF" id="PIRSF001399">
    <property type="entry name" value="DHquinase_II"/>
    <property type="match status" value="1"/>
</dbReference>
<dbReference type="SUPFAM" id="SSF52304">
    <property type="entry name" value="Type II 3-dehydroquinate dehydratase"/>
    <property type="match status" value="1"/>
</dbReference>
<dbReference type="PROSITE" id="PS01029">
    <property type="entry name" value="DEHYDROQUINASE_II"/>
    <property type="match status" value="1"/>
</dbReference>
<evidence type="ECO:0000255" key="1">
    <source>
        <dbReference type="HAMAP-Rule" id="MF_00169"/>
    </source>
</evidence>
<protein>
    <recommendedName>
        <fullName evidence="1">3-dehydroquinate dehydratase</fullName>
        <shortName evidence="1">3-dehydroquinase</shortName>
        <ecNumber evidence="1">4.2.1.10</ecNumber>
    </recommendedName>
    <alternativeName>
        <fullName evidence="1">Type II DHQase</fullName>
    </alternativeName>
</protein>
<sequence>MKILVINGPNINFLGIREKEIYGEGTYEDLCKFIKDEGSKIGIEVEVMQSNIEGEIINFLQAAYNKVDGIVINPGAYTHYSIAIYDAIKSINIPTVEVHISNIHTREEYRRKSVTAPACIGQICGFGFYGYVMGITALKNMLSK</sequence>
<name>AROQ_CLOAB</name>
<organism>
    <name type="scientific">Clostridium acetobutylicum (strain ATCC 824 / DSM 792 / JCM 1419 / IAM 19013 / LMG 5710 / NBRC 13948 / NRRL B-527 / VKM B-1787 / 2291 / W)</name>
    <dbReference type="NCBI Taxonomy" id="272562"/>
    <lineage>
        <taxon>Bacteria</taxon>
        <taxon>Bacillati</taxon>
        <taxon>Bacillota</taxon>
        <taxon>Clostridia</taxon>
        <taxon>Eubacteriales</taxon>
        <taxon>Clostridiaceae</taxon>
        <taxon>Clostridium</taxon>
    </lineage>
</organism>
<comment type="function">
    <text evidence="1">Catalyzes a trans-dehydration via an enolate intermediate.</text>
</comment>
<comment type="catalytic activity">
    <reaction evidence="1">
        <text>3-dehydroquinate = 3-dehydroshikimate + H2O</text>
        <dbReference type="Rhea" id="RHEA:21096"/>
        <dbReference type="ChEBI" id="CHEBI:15377"/>
        <dbReference type="ChEBI" id="CHEBI:16630"/>
        <dbReference type="ChEBI" id="CHEBI:32364"/>
        <dbReference type="EC" id="4.2.1.10"/>
    </reaction>
</comment>
<comment type="pathway">
    <text evidence="1">Metabolic intermediate biosynthesis; chorismate biosynthesis; chorismate from D-erythrose 4-phosphate and phosphoenolpyruvate: step 3/7.</text>
</comment>
<comment type="subunit">
    <text evidence="1">Homododecamer.</text>
</comment>
<comment type="similarity">
    <text evidence="1">Belongs to the type-II 3-dehydroquinase family.</text>
</comment>
<reference key="1">
    <citation type="journal article" date="2001" name="J. Bacteriol.">
        <title>Genome sequence and comparative analysis of the solvent-producing bacterium Clostridium acetobutylicum.</title>
        <authorList>
            <person name="Noelling J."/>
            <person name="Breton G."/>
            <person name="Omelchenko M.V."/>
            <person name="Makarova K.S."/>
            <person name="Zeng Q."/>
            <person name="Gibson R."/>
            <person name="Lee H.M."/>
            <person name="Dubois J."/>
            <person name="Qiu D."/>
            <person name="Hitti J."/>
            <person name="Wolf Y.I."/>
            <person name="Tatusov R.L."/>
            <person name="Sabathe F."/>
            <person name="Doucette-Stamm L.A."/>
            <person name="Soucaille P."/>
            <person name="Daly M.J."/>
            <person name="Bennett G.N."/>
            <person name="Koonin E.V."/>
            <person name="Smith D.R."/>
        </authorList>
    </citation>
    <scope>NUCLEOTIDE SEQUENCE [LARGE SCALE GENOMIC DNA]</scope>
    <source>
        <strain>ATCC 824 / DSM 792 / JCM 1419 / IAM 19013 / LMG 5710 / NBRC 13948 / NRRL B-527 / VKM B-1787 / 2291 / W</strain>
    </source>
</reference>